<name>RECR_DESRM</name>
<organism>
    <name type="scientific">Desulforamulus reducens (strain ATCC BAA-1160 / DSM 100696 / MI-1)</name>
    <name type="common">Desulfotomaculum reducens</name>
    <dbReference type="NCBI Taxonomy" id="349161"/>
    <lineage>
        <taxon>Bacteria</taxon>
        <taxon>Bacillati</taxon>
        <taxon>Bacillota</taxon>
        <taxon>Clostridia</taxon>
        <taxon>Eubacteriales</taxon>
        <taxon>Peptococcaceae</taxon>
        <taxon>Desulforamulus</taxon>
    </lineage>
</organism>
<evidence type="ECO:0000255" key="1">
    <source>
        <dbReference type="HAMAP-Rule" id="MF_00017"/>
    </source>
</evidence>
<accession>A4J0J1</accession>
<comment type="function">
    <text evidence="1">May play a role in DNA repair. It seems to be involved in an RecBC-independent recombinational process of DNA repair. It may act with RecF and RecO.</text>
</comment>
<comment type="similarity">
    <text evidence="1">Belongs to the RecR family.</text>
</comment>
<proteinExistence type="inferred from homology"/>
<dbReference type="EMBL" id="CP000612">
    <property type="protein sequence ID" value="ABO48594.1"/>
    <property type="molecule type" value="Genomic_DNA"/>
</dbReference>
<dbReference type="RefSeq" id="WP_011876438.1">
    <property type="nucleotide sequence ID" value="NC_009253.1"/>
</dbReference>
<dbReference type="SMR" id="A4J0J1"/>
<dbReference type="STRING" id="349161.Dred_0044"/>
<dbReference type="KEGG" id="drm:Dred_0044"/>
<dbReference type="eggNOG" id="COG0353">
    <property type="taxonomic scope" value="Bacteria"/>
</dbReference>
<dbReference type="HOGENOM" id="CLU_060739_1_0_9"/>
<dbReference type="OrthoDB" id="9802672at2"/>
<dbReference type="Proteomes" id="UP000001556">
    <property type="component" value="Chromosome"/>
</dbReference>
<dbReference type="GO" id="GO:0003677">
    <property type="term" value="F:DNA binding"/>
    <property type="evidence" value="ECO:0007669"/>
    <property type="project" value="UniProtKB-UniRule"/>
</dbReference>
<dbReference type="GO" id="GO:0008270">
    <property type="term" value="F:zinc ion binding"/>
    <property type="evidence" value="ECO:0007669"/>
    <property type="project" value="UniProtKB-KW"/>
</dbReference>
<dbReference type="GO" id="GO:0006310">
    <property type="term" value="P:DNA recombination"/>
    <property type="evidence" value="ECO:0007669"/>
    <property type="project" value="UniProtKB-UniRule"/>
</dbReference>
<dbReference type="GO" id="GO:0006281">
    <property type="term" value="P:DNA repair"/>
    <property type="evidence" value="ECO:0007669"/>
    <property type="project" value="UniProtKB-UniRule"/>
</dbReference>
<dbReference type="CDD" id="cd01025">
    <property type="entry name" value="TOPRIM_recR"/>
    <property type="match status" value="1"/>
</dbReference>
<dbReference type="Gene3D" id="3.30.60.80">
    <property type="match status" value="1"/>
</dbReference>
<dbReference type="Gene3D" id="3.40.1360.10">
    <property type="match status" value="1"/>
</dbReference>
<dbReference type="Gene3D" id="6.10.250.240">
    <property type="match status" value="1"/>
</dbReference>
<dbReference type="Gene3D" id="1.10.8.420">
    <property type="entry name" value="RecR Domain 1"/>
    <property type="match status" value="1"/>
</dbReference>
<dbReference type="HAMAP" id="MF_00017">
    <property type="entry name" value="RecR"/>
    <property type="match status" value="1"/>
</dbReference>
<dbReference type="InterPro" id="IPR000093">
    <property type="entry name" value="DNA_Rcmb_RecR"/>
</dbReference>
<dbReference type="InterPro" id="IPR003583">
    <property type="entry name" value="Hlx-hairpin-Hlx_DNA-bd_motif"/>
</dbReference>
<dbReference type="InterPro" id="IPR023627">
    <property type="entry name" value="Rcmb_RecR"/>
</dbReference>
<dbReference type="InterPro" id="IPR015967">
    <property type="entry name" value="Rcmb_RecR_Znf"/>
</dbReference>
<dbReference type="InterPro" id="IPR006171">
    <property type="entry name" value="TOPRIM_dom"/>
</dbReference>
<dbReference type="InterPro" id="IPR034137">
    <property type="entry name" value="TOPRIM_RecR"/>
</dbReference>
<dbReference type="NCBIfam" id="TIGR00615">
    <property type="entry name" value="recR"/>
    <property type="match status" value="1"/>
</dbReference>
<dbReference type="PANTHER" id="PTHR30446">
    <property type="entry name" value="RECOMBINATION PROTEIN RECR"/>
    <property type="match status" value="1"/>
</dbReference>
<dbReference type="PANTHER" id="PTHR30446:SF0">
    <property type="entry name" value="RECOMBINATION PROTEIN RECR"/>
    <property type="match status" value="1"/>
</dbReference>
<dbReference type="Pfam" id="PF21175">
    <property type="entry name" value="RecR_C"/>
    <property type="match status" value="1"/>
</dbReference>
<dbReference type="Pfam" id="PF21176">
    <property type="entry name" value="RecR_HhH"/>
    <property type="match status" value="1"/>
</dbReference>
<dbReference type="Pfam" id="PF02132">
    <property type="entry name" value="RecR_ZnF"/>
    <property type="match status" value="1"/>
</dbReference>
<dbReference type="Pfam" id="PF13662">
    <property type="entry name" value="Toprim_4"/>
    <property type="match status" value="1"/>
</dbReference>
<dbReference type="SMART" id="SM00278">
    <property type="entry name" value="HhH1"/>
    <property type="match status" value="1"/>
</dbReference>
<dbReference type="SMART" id="SM00493">
    <property type="entry name" value="TOPRIM"/>
    <property type="match status" value="1"/>
</dbReference>
<dbReference type="SUPFAM" id="SSF111304">
    <property type="entry name" value="Recombination protein RecR"/>
    <property type="match status" value="1"/>
</dbReference>
<dbReference type="PROSITE" id="PS01300">
    <property type="entry name" value="RECR"/>
    <property type="match status" value="1"/>
</dbReference>
<dbReference type="PROSITE" id="PS50880">
    <property type="entry name" value="TOPRIM"/>
    <property type="match status" value="1"/>
</dbReference>
<gene>
    <name evidence="1" type="primary">recR</name>
    <name type="ordered locus">Dred_0044</name>
</gene>
<feature type="chain" id="PRO_1000070974" description="Recombination protein RecR">
    <location>
        <begin position="1"/>
        <end position="200"/>
    </location>
</feature>
<feature type="domain" description="Toprim" evidence="1">
    <location>
        <begin position="81"/>
        <end position="176"/>
    </location>
</feature>
<feature type="zinc finger region" description="C4-type" evidence="1">
    <location>
        <begin position="58"/>
        <end position="73"/>
    </location>
</feature>
<sequence>MLYYSGPVARLVDEFAKLPGIGPKTAQRLAFHVLNSPPELAQGLAKALVEVRQSIKRCSLCCNLTDEDPCSICQDTTRNSNLLCVVEEPRDVIAMEKARGYRGYYHVLHGAISPMEGIRPEDLTIKELLHRLQNGDIQEVILAANSDVEGETTALYLARLLKPLGVKVTRIAHGIPVGSDLEYADAMTLNKALEGRGEFG</sequence>
<keyword id="KW-0227">DNA damage</keyword>
<keyword id="KW-0233">DNA recombination</keyword>
<keyword id="KW-0234">DNA repair</keyword>
<keyword id="KW-0479">Metal-binding</keyword>
<keyword id="KW-1185">Reference proteome</keyword>
<keyword id="KW-0862">Zinc</keyword>
<keyword id="KW-0863">Zinc-finger</keyword>
<reference key="1">
    <citation type="submission" date="2007-03" db="EMBL/GenBank/DDBJ databases">
        <title>Complete sequence of Desulfotomaculum reducens MI-1.</title>
        <authorList>
            <consortium name="US DOE Joint Genome Institute"/>
            <person name="Copeland A."/>
            <person name="Lucas S."/>
            <person name="Lapidus A."/>
            <person name="Barry K."/>
            <person name="Detter J.C."/>
            <person name="Glavina del Rio T."/>
            <person name="Hammon N."/>
            <person name="Israni S."/>
            <person name="Dalin E."/>
            <person name="Tice H."/>
            <person name="Pitluck S."/>
            <person name="Sims D."/>
            <person name="Brettin T."/>
            <person name="Bruce D."/>
            <person name="Han C."/>
            <person name="Tapia R."/>
            <person name="Schmutz J."/>
            <person name="Larimer F."/>
            <person name="Land M."/>
            <person name="Hauser L."/>
            <person name="Kyrpides N."/>
            <person name="Kim E."/>
            <person name="Tebo B.M."/>
            <person name="Richardson P."/>
        </authorList>
    </citation>
    <scope>NUCLEOTIDE SEQUENCE [LARGE SCALE GENOMIC DNA]</scope>
    <source>
        <strain>ATCC BAA-1160 / DSM 100696 / MI-1</strain>
    </source>
</reference>
<protein>
    <recommendedName>
        <fullName evidence="1">Recombination protein RecR</fullName>
    </recommendedName>
</protein>